<proteinExistence type="inferred from homology"/>
<gene>
    <name evidence="1" type="primary">plsX</name>
    <name type="ordered locus">Patl_2125</name>
</gene>
<comment type="function">
    <text evidence="1">Catalyzes the reversible formation of acyl-phosphate (acyl-PO(4)) from acyl-[acyl-carrier-protein] (acyl-ACP). This enzyme utilizes acyl-ACP as fatty acyl donor, but not acyl-CoA.</text>
</comment>
<comment type="catalytic activity">
    <reaction evidence="1">
        <text>a fatty acyl-[ACP] + phosphate = an acyl phosphate + holo-[ACP]</text>
        <dbReference type="Rhea" id="RHEA:42292"/>
        <dbReference type="Rhea" id="RHEA-COMP:9685"/>
        <dbReference type="Rhea" id="RHEA-COMP:14125"/>
        <dbReference type="ChEBI" id="CHEBI:43474"/>
        <dbReference type="ChEBI" id="CHEBI:59918"/>
        <dbReference type="ChEBI" id="CHEBI:64479"/>
        <dbReference type="ChEBI" id="CHEBI:138651"/>
        <dbReference type="EC" id="2.3.1.274"/>
    </reaction>
</comment>
<comment type="pathway">
    <text evidence="1">Lipid metabolism; phospholipid metabolism.</text>
</comment>
<comment type="subunit">
    <text evidence="1">Homodimer. Probably interacts with PlsY.</text>
</comment>
<comment type="subcellular location">
    <subcellularLocation>
        <location evidence="1">Cytoplasm</location>
    </subcellularLocation>
    <text evidence="1">Associated with the membrane possibly through PlsY.</text>
</comment>
<comment type="similarity">
    <text evidence="1">Belongs to the PlsX family.</text>
</comment>
<protein>
    <recommendedName>
        <fullName evidence="1">Phosphate acyltransferase</fullName>
        <ecNumber evidence="1">2.3.1.274</ecNumber>
    </recommendedName>
    <alternativeName>
        <fullName evidence="1">Acyl-ACP phosphotransacylase</fullName>
    </alternativeName>
    <alternativeName>
        <fullName evidence="1">Acyl-[acyl-carrier-protein]--phosphate acyltransferase</fullName>
    </alternativeName>
    <alternativeName>
        <fullName evidence="1">Phosphate-acyl-ACP acyltransferase</fullName>
    </alternativeName>
</protein>
<reference key="1">
    <citation type="submission" date="2006-06" db="EMBL/GenBank/DDBJ databases">
        <title>Complete sequence of Pseudoalteromonas atlantica T6c.</title>
        <authorList>
            <consortium name="US DOE Joint Genome Institute"/>
            <person name="Copeland A."/>
            <person name="Lucas S."/>
            <person name="Lapidus A."/>
            <person name="Barry K."/>
            <person name="Detter J.C."/>
            <person name="Glavina del Rio T."/>
            <person name="Hammon N."/>
            <person name="Israni S."/>
            <person name="Dalin E."/>
            <person name="Tice H."/>
            <person name="Pitluck S."/>
            <person name="Saunders E."/>
            <person name="Brettin T."/>
            <person name="Bruce D."/>
            <person name="Han C."/>
            <person name="Tapia R."/>
            <person name="Gilna P."/>
            <person name="Schmutz J."/>
            <person name="Larimer F."/>
            <person name="Land M."/>
            <person name="Hauser L."/>
            <person name="Kyrpides N."/>
            <person name="Kim E."/>
            <person name="Karls A.C."/>
            <person name="Bartlett D."/>
            <person name="Higgins B.P."/>
            <person name="Richardson P."/>
        </authorList>
    </citation>
    <scope>NUCLEOTIDE SEQUENCE [LARGE SCALE GENOMIC DNA]</scope>
    <source>
        <strain>T6c / ATCC BAA-1087</strain>
    </source>
</reference>
<accession>Q15TZ5</accession>
<sequence>MRHLTLALDIMGGDNGPHIILSAALKALNEFPHLNLIFCGDEDVITSWLNQHSSSLSNRYSIVHCNQQVLMDDNPVKALRHKKDSSMACAIKHVHNEQADACVSAGNTGALLAMACSQLKTLSGVNRPALVSSLPTAKGHKVYLLDLGATVQSDAQTLLQNAVMGSVLAEQIAGIERPRVAILNVGEEQIKGPANIKEASQLLAASDHLNYIGFVEGDDIFNDIADVIVTDGFSGNIALKSCEGLVKLLIEQVKRDAKRNILSKIMAKLAMPLLRRLYLRVNPDQYNGASLIGLRGIVVKSHGNASDEAFLYAIREAVQEAERQVPTKIKDKIENLLMERS</sequence>
<feature type="chain" id="PRO_1000001802" description="Phosphate acyltransferase">
    <location>
        <begin position="1"/>
        <end position="341"/>
    </location>
</feature>
<dbReference type="EC" id="2.3.1.274" evidence="1"/>
<dbReference type="EMBL" id="CP000388">
    <property type="protein sequence ID" value="ABG40643.1"/>
    <property type="molecule type" value="Genomic_DNA"/>
</dbReference>
<dbReference type="RefSeq" id="WP_011574930.1">
    <property type="nucleotide sequence ID" value="NC_008228.1"/>
</dbReference>
<dbReference type="SMR" id="Q15TZ5"/>
<dbReference type="STRING" id="342610.Patl_2125"/>
<dbReference type="KEGG" id="pat:Patl_2125"/>
<dbReference type="eggNOG" id="COG0416">
    <property type="taxonomic scope" value="Bacteria"/>
</dbReference>
<dbReference type="HOGENOM" id="CLU_039379_1_0_6"/>
<dbReference type="OrthoDB" id="9806408at2"/>
<dbReference type="UniPathway" id="UPA00085"/>
<dbReference type="Proteomes" id="UP000001981">
    <property type="component" value="Chromosome"/>
</dbReference>
<dbReference type="GO" id="GO:0005737">
    <property type="term" value="C:cytoplasm"/>
    <property type="evidence" value="ECO:0007669"/>
    <property type="project" value="UniProtKB-SubCell"/>
</dbReference>
<dbReference type="GO" id="GO:0043811">
    <property type="term" value="F:phosphate:acyl-[acyl carrier protein] acyltransferase activity"/>
    <property type="evidence" value="ECO:0007669"/>
    <property type="project" value="UniProtKB-UniRule"/>
</dbReference>
<dbReference type="GO" id="GO:0006633">
    <property type="term" value="P:fatty acid biosynthetic process"/>
    <property type="evidence" value="ECO:0007669"/>
    <property type="project" value="UniProtKB-UniRule"/>
</dbReference>
<dbReference type="GO" id="GO:0008654">
    <property type="term" value="P:phospholipid biosynthetic process"/>
    <property type="evidence" value="ECO:0007669"/>
    <property type="project" value="UniProtKB-KW"/>
</dbReference>
<dbReference type="Gene3D" id="3.40.718.10">
    <property type="entry name" value="Isopropylmalate Dehydrogenase"/>
    <property type="match status" value="1"/>
</dbReference>
<dbReference type="HAMAP" id="MF_00019">
    <property type="entry name" value="PlsX"/>
    <property type="match status" value="1"/>
</dbReference>
<dbReference type="InterPro" id="IPR003664">
    <property type="entry name" value="FA_synthesis"/>
</dbReference>
<dbReference type="InterPro" id="IPR012281">
    <property type="entry name" value="Phospholipid_synth_PlsX-like"/>
</dbReference>
<dbReference type="NCBIfam" id="TIGR00182">
    <property type="entry name" value="plsX"/>
    <property type="match status" value="1"/>
</dbReference>
<dbReference type="PANTHER" id="PTHR30100">
    <property type="entry name" value="FATTY ACID/PHOSPHOLIPID SYNTHESIS PROTEIN PLSX"/>
    <property type="match status" value="1"/>
</dbReference>
<dbReference type="PANTHER" id="PTHR30100:SF1">
    <property type="entry name" value="PHOSPHATE ACYLTRANSFERASE"/>
    <property type="match status" value="1"/>
</dbReference>
<dbReference type="Pfam" id="PF02504">
    <property type="entry name" value="FA_synthesis"/>
    <property type="match status" value="1"/>
</dbReference>
<dbReference type="PIRSF" id="PIRSF002465">
    <property type="entry name" value="Phsphlp_syn_PlsX"/>
    <property type="match status" value="1"/>
</dbReference>
<dbReference type="SUPFAM" id="SSF53659">
    <property type="entry name" value="Isocitrate/Isopropylmalate dehydrogenase-like"/>
    <property type="match status" value="1"/>
</dbReference>
<evidence type="ECO:0000255" key="1">
    <source>
        <dbReference type="HAMAP-Rule" id="MF_00019"/>
    </source>
</evidence>
<name>PLSX_PSEA6</name>
<keyword id="KW-0963">Cytoplasm</keyword>
<keyword id="KW-0444">Lipid biosynthesis</keyword>
<keyword id="KW-0443">Lipid metabolism</keyword>
<keyword id="KW-0594">Phospholipid biosynthesis</keyword>
<keyword id="KW-1208">Phospholipid metabolism</keyword>
<keyword id="KW-0808">Transferase</keyword>
<organism>
    <name type="scientific">Pseudoalteromonas atlantica (strain T6c / ATCC BAA-1087)</name>
    <dbReference type="NCBI Taxonomy" id="3042615"/>
    <lineage>
        <taxon>Bacteria</taxon>
        <taxon>Pseudomonadati</taxon>
        <taxon>Pseudomonadota</taxon>
        <taxon>Gammaproteobacteria</taxon>
        <taxon>Alteromonadales</taxon>
        <taxon>Alteromonadaceae</taxon>
        <taxon>Paraglaciecola</taxon>
    </lineage>
</organism>